<reference key="1">
    <citation type="journal article" date="2009" name="PLoS Genet.">
        <title>Organised genome dynamics in the Escherichia coli species results in highly diverse adaptive paths.</title>
        <authorList>
            <person name="Touchon M."/>
            <person name="Hoede C."/>
            <person name="Tenaillon O."/>
            <person name="Barbe V."/>
            <person name="Baeriswyl S."/>
            <person name="Bidet P."/>
            <person name="Bingen E."/>
            <person name="Bonacorsi S."/>
            <person name="Bouchier C."/>
            <person name="Bouvet O."/>
            <person name="Calteau A."/>
            <person name="Chiapello H."/>
            <person name="Clermont O."/>
            <person name="Cruveiller S."/>
            <person name="Danchin A."/>
            <person name="Diard M."/>
            <person name="Dossat C."/>
            <person name="Karoui M.E."/>
            <person name="Frapy E."/>
            <person name="Garry L."/>
            <person name="Ghigo J.M."/>
            <person name="Gilles A.M."/>
            <person name="Johnson J."/>
            <person name="Le Bouguenec C."/>
            <person name="Lescat M."/>
            <person name="Mangenot S."/>
            <person name="Martinez-Jehanne V."/>
            <person name="Matic I."/>
            <person name="Nassif X."/>
            <person name="Oztas S."/>
            <person name="Petit M.A."/>
            <person name="Pichon C."/>
            <person name="Rouy Z."/>
            <person name="Ruf C.S."/>
            <person name="Schneider D."/>
            <person name="Tourret J."/>
            <person name="Vacherie B."/>
            <person name="Vallenet D."/>
            <person name="Medigue C."/>
            <person name="Rocha E.P.C."/>
            <person name="Denamur E."/>
        </authorList>
    </citation>
    <scope>NUCLEOTIDE SEQUENCE [LARGE SCALE GENOMIC DNA]</scope>
    <source>
        <strain>S88 / ExPEC</strain>
    </source>
</reference>
<organism>
    <name type="scientific">Escherichia coli O45:K1 (strain S88 / ExPEC)</name>
    <dbReference type="NCBI Taxonomy" id="585035"/>
    <lineage>
        <taxon>Bacteria</taxon>
        <taxon>Pseudomonadati</taxon>
        <taxon>Pseudomonadota</taxon>
        <taxon>Gammaproteobacteria</taxon>
        <taxon>Enterobacterales</taxon>
        <taxon>Enterobacteriaceae</taxon>
        <taxon>Escherichia</taxon>
    </lineage>
</organism>
<keyword id="KW-1185">Reference proteome</keyword>
<keyword id="KW-0687">Ribonucleoprotein</keyword>
<keyword id="KW-0689">Ribosomal protein</keyword>
<keyword id="KW-0694">RNA-binding</keyword>
<keyword id="KW-0699">rRNA-binding</keyword>
<accession>B7MB86</accession>
<proteinExistence type="inferred from homology"/>
<evidence type="ECO:0000255" key="1">
    <source>
        <dbReference type="HAMAP-Rule" id="MF_01343"/>
    </source>
</evidence>
<evidence type="ECO:0000305" key="2"/>
<protein>
    <recommendedName>
        <fullName evidence="1">Small ribosomal subunit protein uS15</fullName>
    </recommendedName>
    <alternativeName>
        <fullName evidence="2">30S ribosomal protein S15</fullName>
    </alternativeName>
</protein>
<comment type="function">
    <text evidence="1">One of the primary rRNA binding proteins, it binds directly to 16S rRNA where it helps nucleate assembly of the platform of the 30S subunit by binding and bridging several RNA helices of the 16S rRNA.</text>
</comment>
<comment type="function">
    <text evidence="1">Forms an intersubunit bridge (bridge B4) with the 23S rRNA of the 50S subunit in the ribosome.</text>
</comment>
<comment type="subunit">
    <text evidence="1">Part of the 30S ribosomal subunit. Forms a bridge to the 50S subunit in the 70S ribosome, contacting the 23S rRNA.</text>
</comment>
<comment type="similarity">
    <text evidence="1">Belongs to the universal ribosomal protein uS15 family.</text>
</comment>
<sequence length="89" mass="10269">MSLSTEATAKIVSEFGRDANDTGSTEVQVALLTAQINHLQGHFAEHKKDHHSRRGLLRMVSQRRKLLDYLKRKDVARYTQLIERLGLRR</sequence>
<gene>
    <name evidence="1" type="primary">rpsO</name>
    <name type="ordered locus">ECS88_3549</name>
</gene>
<dbReference type="EMBL" id="CU928161">
    <property type="protein sequence ID" value="CAR04777.1"/>
    <property type="molecule type" value="Genomic_DNA"/>
</dbReference>
<dbReference type="RefSeq" id="WP_000059466.1">
    <property type="nucleotide sequence ID" value="NC_011742.1"/>
</dbReference>
<dbReference type="EMDB" id="EMD-7014"/>
<dbReference type="EMDB" id="EMD-7015"/>
<dbReference type="EMDB" id="EMD-7016"/>
<dbReference type="EMDB" id="EMD-7970"/>
<dbReference type="EMDB" id="EMD-8826"/>
<dbReference type="EMDB" id="EMD-8829"/>
<dbReference type="SMR" id="B7MB86"/>
<dbReference type="IntAct" id="B7MB86">
    <property type="interactions" value="1"/>
</dbReference>
<dbReference type="GeneID" id="93778818"/>
<dbReference type="KEGG" id="ecz:ECS88_3549"/>
<dbReference type="HOGENOM" id="CLU_148518_0_0_6"/>
<dbReference type="Proteomes" id="UP000000747">
    <property type="component" value="Chromosome"/>
</dbReference>
<dbReference type="GO" id="GO:0022627">
    <property type="term" value="C:cytosolic small ribosomal subunit"/>
    <property type="evidence" value="ECO:0007669"/>
    <property type="project" value="TreeGrafter"/>
</dbReference>
<dbReference type="GO" id="GO:0019843">
    <property type="term" value="F:rRNA binding"/>
    <property type="evidence" value="ECO:0007669"/>
    <property type="project" value="UniProtKB-UniRule"/>
</dbReference>
<dbReference type="GO" id="GO:0003735">
    <property type="term" value="F:structural constituent of ribosome"/>
    <property type="evidence" value="ECO:0007669"/>
    <property type="project" value="InterPro"/>
</dbReference>
<dbReference type="GO" id="GO:0006412">
    <property type="term" value="P:translation"/>
    <property type="evidence" value="ECO:0007669"/>
    <property type="project" value="UniProtKB-UniRule"/>
</dbReference>
<dbReference type="CDD" id="cd00353">
    <property type="entry name" value="Ribosomal_S15p_S13e"/>
    <property type="match status" value="1"/>
</dbReference>
<dbReference type="FunFam" id="1.10.287.10:FF:000002">
    <property type="entry name" value="30S ribosomal protein S15"/>
    <property type="match status" value="1"/>
</dbReference>
<dbReference type="Gene3D" id="6.10.250.3130">
    <property type="match status" value="1"/>
</dbReference>
<dbReference type="Gene3D" id="1.10.287.10">
    <property type="entry name" value="S15/NS1, RNA-binding"/>
    <property type="match status" value="1"/>
</dbReference>
<dbReference type="HAMAP" id="MF_01343_B">
    <property type="entry name" value="Ribosomal_uS15_B"/>
    <property type="match status" value="1"/>
</dbReference>
<dbReference type="InterPro" id="IPR000589">
    <property type="entry name" value="Ribosomal_uS15"/>
</dbReference>
<dbReference type="InterPro" id="IPR005290">
    <property type="entry name" value="Ribosomal_uS15_bac-type"/>
</dbReference>
<dbReference type="InterPro" id="IPR009068">
    <property type="entry name" value="uS15_NS1_RNA-bd_sf"/>
</dbReference>
<dbReference type="NCBIfam" id="TIGR00952">
    <property type="entry name" value="S15_bact"/>
    <property type="match status" value="1"/>
</dbReference>
<dbReference type="PANTHER" id="PTHR23321">
    <property type="entry name" value="RIBOSOMAL PROTEIN S15, BACTERIAL AND ORGANELLAR"/>
    <property type="match status" value="1"/>
</dbReference>
<dbReference type="PANTHER" id="PTHR23321:SF26">
    <property type="entry name" value="SMALL RIBOSOMAL SUBUNIT PROTEIN US15M"/>
    <property type="match status" value="1"/>
</dbReference>
<dbReference type="Pfam" id="PF00312">
    <property type="entry name" value="Ribosomal_S15"/>
    <property type="match status" value="1"/>
</dbReference>
<dbReference type="SMART" id="SM01387">
    <property type="entry name" value="Ribosomal_S15"/>
    <property type="match status" value="1"/>
</dbReference>
<dbReference type="SUPFAM" id="SSF47060">
    <property type="entry name" value="S15/NS1 RNA-binding domain"/>
    <property type="match status" value="1"/>
</dbReference>
<dbReference type="PROSITE" id="PS00362">
    <property type="entry name" value="RIBOSOMAL_S15"/>
    <property type="match status" value="1"/>
</dbReference>
<feature type="chain" id="PRO_1000143108" description="Small ribosomal subunit protein uS15">
    <location>
        <begin position="1"/>
        <end position="89"/>
    </location>
</feature>
<name>RS15_ECO45</name>